<sequence length="829" mass="93027">MNSGVAMKYGNDSSAELSELHSAALASLKGDIVELNKRLQQTERERDLLEKKLAKAQCEQSHLMREHEDVQERTTLRYEERITELHSVIAELNKKIDRLQGTTIREEDEYSELRSELSQSQHEVNEDSRSMDQDQTSVSIPENQSTMVTADMDNCSDLNSELQRVLTGLENVVCGRKKSSCSLSVAEVDKHIEQLTTASEHCDLAIKTVEEIEGVLGRDLYPNLAEERSRWEKELAGLREENESLTAMLCSKEEELNRTKATMNAIREERDRLRRRVRELQTRLQSVQATGPSSPGRLTSTNRPINPSTGELSTSSSSNDIPIAKIAERVKLSKTRSESSSSDRPVLGSEISSIGVSSSVAEHLAHSLQDCSNIQEIFQTLYSHGSAISESKIREFEVETERLNSRIEHLKSQNDLLTITLEECKSNAERMSMLVGKYESNATALRLALQYSEQCIEAYELLLALAESEQSLILGQFRAAGVGSSPGDQSGDENITQMLKRAHDCRKTAENAAKALLMKLDGSCGGAFAVAGCSVQPWESLSSNSHTSTTSSTASSCDTEFTKEDEQRLKDYIQQLKNDRAAVKLTMLELESIHIDPLSYDVKPRGDSQRLDLENAVLMQELMAMKEEMAELKAQLYLLEKEKKALELKLSTREAQEQAYLVHIEHLKSEVEEQKEQRMRSLSSTSSGSKDKPGKECADAASPALSLAELRTTCSENELAAEFTNAIRREKKLKARVQELVSALERLTKSSEIRHQQSAEFVNDLKRANSNLVAAYEKAKKKHQNKLKKLESQMMAMVERHETQVRMLKQRIALLEEENSRPHTNETSL</sequence>
<accession>P23508</accession>
<accession>D3DT05</accession>
<accession>Q6ZR04</accession>
<reference key="1">
    <citation type="journal article" date="1991" name="Science">
        <title>Identification of a gene located at chromosome 5q21 that is mutated in colorectal cancers.</title>
        <authorList>
            <person name="Kinzler K.W."/>
            <person name="Nilbert M.C."/>
            <person name="Vogelstein B."/>
            <person name="Bryan T.M."/>
            <person name="Levy D.B."/>
            <person name="Smith K.J."/>
            <person name="Preisinger A.C."/>
            <person name="Hamilton S.R."/>
            <person name="Hedge P."/>
            <person name="Markham A."/>
            <person name="Carlson M."/>
            <person name="Joslyn G."/>
            <person name="Groden J."/>
            <person name="White R."/>
            <person name="Miki Y."/>
            <person name="Miyoshi Y."/>
            <person name="Nishisho I."/>
            <person name="Nakamura Y."/>
        </authorList>
    </citation>
    <scope>NUCLEOTIDE SEQUENCE [MRNA]</scope>
    <scope>VARIANTS ARG-190; GLN-506 AND VAL-698</scope>
    <source>
        <tissue>Brain</tissue>
    </source>
</reference>
<reference key="2">
    <citation type="journal article" date="2004" name="Nature">
        <title>The DNA sequence and comparative analysis of human chromosome 5.</title>
        <authorList>
            <person name="Schmutz J."/>
            <person name="Martin J."/>
            <person name="Terry A."/>
            <person name="Couronne O."/>
            <person name="Grimwood J."/>
            <person name="Lowry S."/>
            <person name="Gordon L.A."/>
            <person name="Scott D."/>
            <person name="Xie G."/>
            <person name="Huang W."/>
            <person name="Hellsten U."/>
            <person name="Tran-Gyamfi M."/>
            <person name="She X."/>
            <person name="Prabhakar S."/>
            <person name="Aerts A."/>
            <person name="Altherr M."/>
            <person name="Bajorek E."/>
            <person name="Black S."/>
            <person name="Branscomb E."/>
            <person name="Caoile C."/>
            <person name="Challacombe J.F."/>
            <person name="Chan Y.M."/>
            <person name="Denys M."/>
            <person name="Detter J.C."/>
            <person name="Escobar J."/>
            <person name="Flowers D."/>
            <person name="Fotopulos D."/>
            <person name="Glavina T."/>
            <person name="Gomez M."/>
            <person name="Gonzales E."/>
            <person name="Goodstein D."/>
            <person name="Grigoriev I."/>
            <person name="Groza M."/>
            <person name="Hammon N."/>
            <person name="Hawkins T."/>
            <person name="Haydu L."/>
            <person name="Israni S."/>
            <person name="Jett J."/>
            <person name="Kadner K."/>
            <person name="Kimball H."/>
            <person name="Kobayashi A."/>
            <person name="Lopez F."/>
            <person name="Lou Y."/>
            <person name="Martinez D."/>
            <person name="Medina C."/>
            <person name="Morgan J."/>
            <person name="Nandkeshwar R."/>
            <person name="Noonan J.P."/>
            <person name="Pitluck S."/>
            <person name="Pollard M."/>
            <person name="Predki P."/>
            <person name="Priest J."/>
            <person name="Ramirez L."/>
            <person name="Retterer J."/>
            <person name="Rodriguez A."/>
            <person name="Rogers S."/>
            <person name="Salamov A."/>
            <person name="Salazar A."/>
            <person name="Thayer N."/>
            <person name="Tice H."/>
            <person name="Tsai M."/>
            <person name="Ustaszewska A."/>
            <person name="Vo N."/>
            <person name="Wheeler J."/>
            <person name="Wu K."/>
            <person name="Yang J."/>
            <person name="Dickson M."/>
            <person name="Cheng J.-F."/>
            <person name="Eichler E.E."/>
            <person name="Olsen A."/>
            <person name="Pennacchio L.A."/>
            <person name="Rokhsar D.S."/>
            <person name="Richardson P."/>
            <person name="Lucas S.M."/>
            <person name="Myers R.M."/>
            <person name="Rubin E.M."/>
        </authorList>
    </citation>
    <scope>NUCLEOTIDE SEQUENCE [LARGE SCALE GENOMIC DNA]</scope>
</reference>
<reference key="3">
    <citation type="submission" date="2005-09" db="EMBL/GenBank/DDBJ databases">
        <authorList>
            <person name="Mural R.J."/>
            <person name="Istrail S."/>
            <person name="Sutton G.G."/>
            <person name="Florea L."/>
            <person name="Halpern A.L."/>
            <person name="Mobarry C.M."/>
            <person name="Lippert R."/>
            <person name="Walenz B."/>
            <person name="Shatkay H."/>
            <person name="Dew I."/>
            <person name="Miller J.R."/>
            <person name="Flanigan M.J."/>
            <person name="Edwards N.J."/>
            <person name="Bolanos R."/>
            <person name="Fasulo D."/>
            <person name="Halldorsson B.V."/>
            <person name="Hannenhalli S."/>
            <person name="Turner R."/>
            <person name="Yooseph S."/>
            <person name="Lu F."/>
            <person name="Nusskern D.R."/>
            <person name="Shue B.C."/>
            <person name="Zheng X.H."/>
            <person name="Zhong F."/>
            <person name="Delcher A.L."/>
            <person name="Huson D.H."/>
            <person name="Kravitz S.A."/>
            <person name="Mouchard L."/>
            <person name="Reinert K."/>
            <person name="Remington K.A."/>
            <person name="Clark A.G."/>
            <person name="Waterman M.S."/>
            <person name="Eichler E.E."/>
            <person name="Adams M.D."/>
            <person name="Hunkapiller M.W."/>
            <person name="Myers E.W."/>
            <person name="Venter J.C."/>
        </authorList>
    </citation>
    <scope>NUCLEOTIDE SEQUENCE [LARGE SCALE GENOMIC DNA]</scope>
</reference>
<reference key="4">
    <citation type="journal article" date="2004" name="Genome Res.">
        <title>The status, quality, and expansion of the NIH full-length cDNA project: the Mammalian Gene Collection (MGC).</title>
        <authorList>
            <consortium name="The MGC Project Team"/>
        </authorList>
    </citation>
    <scope>NUCLEOTIDE SEQUENCE [LARGE SCALE MRNA]</scope>
    <scope>VARIANT ARG-190</scope>
    <source>
        <tissue>Muscle</tissue>
    </source>
</reference>
<reference key="5">
    <citation type="journal article" date="2004" name="Nat. Genet.">
        <title>Complete sequencing and characterization of 21,243 full-length human cDNAs.</title>
        <authorList>
            <person name="Ota T."/>
            <person name="Suzuki Y."/>
            <person name="Nishikawa T."/>
            <person name="Otsuki T."/>
            <person name="Sugiyama T."/>
            <person name="Irie R."/>
            <person name="Wakamatsu A."/>
            <person name="Hayashi K."/>
            <person name="Sato H."/>
            <person name="Nagai K."/>
            <person name="Kimura K."/>
            <person name="Makita H."/>
            <person name="Sekine M."/>
            <person name="Obayashi M."/>
            <person name="Nishi T."/>
            <person name="Shibahara T."/>
            <person name="Tanaka T."/>
            <person name="Ishii S."/>
            <person name="Yamamoto J."/>
            <person name="Saito K."/>
            <person name="Kawai Y."/>
            <person name="Isono Y."/>
            <person name="Nakamura Y."/>
            <person name="Nagahari K."/>
            <person name="Murakami K."/>
            <person name="Yasuda T."/>
            <person name="Iwayanagi T."/>
            <person name="Wagatsuma M."/>
            <person name="Shiratori A."/>
            <person name="Sudo H."/>
            <person name="Hosoiri T."/>
            <person name="Kaku Y."/>
            <person name="Kodaira H."/>
            <person name="Kondo H."/>
            <person name="Sugawara M."/>
            <person name="Takahashi M."/>
            <person name="Kanda K."/>
            <person name="Yokoi T."/>
            <person name="Furuya T."/>
            <person name="Kikkawa E."/>
            <person name="Omura Y."/>
            <person name="Abe K."/>
            <person name="Kamihara K."/>
            <person name="Katsuta N."/>
            <person name="Sato K."/>
            <person name="Tanikawa M."/>
            <person name="Yamazaki M."/>
            <person name="Ninomiya K."/>
            <person name="Ishibashi T."/>
            <person name="Yamashita H."/>
            <person name="Murakawa K."/>
            <person name="Fujimori K."/>
            <person name="Tanai H."/>
            <person name="Kimata M."/>
            <person name="Watanabe M."/>
            <person name="Hiraoka S."/>
            <person name="Chiba Y."/>
            <person name="Ishida S."/>
            <person name="Ono Y."/>
            <person name="Takiguchi S."/>
            <person name="Watanabe S."/>
            <person name="Yosida M."/>
            <person name="Hotuta T."/>
            <person name="Kusano J."/>
            <person name="Kanehori K."/>
            <person name="Takahashi-Fujii A."/>
            <person name="Hara H."/>
            <person name="Tanase T.-O."/>
            <person name="Nomura Y."/>
            <person name="Togiya S."/>
            <person name="Komai F."/>
            <person name="Hara R."/>
            <person name="Takeuchi K."/>
            <person name="Arita M."/>
            <person name="Imose N."/>
            <person name="Musashino K."/>
            <person name="Yuuki H."/>
            <person name="Oshima A."/>
            <person name="Sasaki N."/>
            <person name="Aotsuka S."/>
            <person name="Yoshikawa Y."/>
            <person name="Matsunawa H."/>
            <person name="Ichihara T."/>
            <person name="Shiohata N."/>
            <person name="Sano S."/>
            <person name="Moriya S."/>
            <person name="Momiyama H."/>
            <person name="Satoh N."/>
            <person name="Takami S."/>
            <person name="Terashima Y."/>
            <person name="Suzuki O."/>
            <person name="Nakagawa S."/>
            <person name="Senoh A."/>
            <person name="Mizoguchi H."/>
            <person name="Goto Y."/>
            <person name="Shimizu F."/>
            <person name="Wakebe H."/>
            <person name="Hishigaki H."/>
            <person name="Watanabe T."/>
            <person name="Sugiyama A."/>
            <person name="Takemoto M."/>
            <person name="Kawakami B."/>
            <person name="Yamazaki M."/>
            <person name="Watanabe K."/>
            <person name="Kumagai A."/>
            <person name="Itakura S."/>
            <person name="Fukuzumi Y."/>
            <person name="Fujimori Y."/>
            <person name="Komiyama M."/>
            <person name="Tashiro H."/>
            <person name="Tanigami A."/>
            <person name="Fujiwara T."/>
            <person name="Ono T."/>
            <person name="Yamada K."/>
            <person name="Fujii Y."/>
            <person name="Ozaki K."/>
            <person name="Hirao M."/>
            <person name="Ohmori Y."/>
            <person name="Kawabata A."/>
            <person name="Hikiji T."/>
            <person name="Kobatake N."/>
            <person name="Inagaki H."/>
            <person name="Ikema Y."/>
            <person name="Okamoto S."/>
            <person name="Okitani R."/>
            <person name="Kawakami T."/>
            <person name="Noguchi S."/>
            <person name="Itoh T."/>
            <person name="Shigeta K."/>
            <person name="Senba T."/>
            <person name="Matsumura K."/>
            <person name="Nakajima Y."/>
            <person name="Mizuno T."/>
            <person name="Morinaga M."/>
            <person name="Sasaki M."/>
            <person name="Togashi T."/>
            <person name="Oyama M."/>
            <person name="Hata H."/>
            <person name="Watanabe M."/>
            <person name="Komatsu T."/>
            <person name="Mizushima-Sugano J."/>
            <person name="Satoh T."/>
            <person name="Shirai Y."/>
            <person name="Takahashi Y."/>
            <person name="Nakagawa K."/>
            <person name="Okumura K."/>
            <person name="Nagase T."/>
            <person name="Nomura N."/>
            <person name="Kikuchi H."/>
            <person name="Masuho Y."/>
            <person name="Yamashita R."/>
            <person name="Nakai K."/>
            <person name="Yada T."/>
            <person name="Nakamura Y."/>
            <person name="Ohara O."/>
            <person name="Isogai T."/>
            <person name="Sugano S."/>
        </authorList>
    </citation>
    <scope>NUCLEOTIDE SEQUENCE [LARGE SCALE MRNA] OF 1-779 (ISOFORM 2)</scope>
    <scope>VARIANT ARG-190</scope>
    <source>
        <tissue>Trachea</tissue>
    </source>
</reference>
<reference key="6">
    <citation type="journal article" date="2008" name="Oncogene">
        <title>Mutated in colorectal cancer, a putative tumor suppressor for serrated colorectal cancer, selectively represses beta-catenin-dependent transcription.</title>
        <authorList>
            <person name="Fukuyama R."/>
            <person name="Niculaita R."/>
            <person name="Ng K.P."/>
            <person name="Obusez E."/>
            <person name="Sanchez J."/>
            <person name="Kalady M."/>
            <person name="Aung P.P."/>
            <person name="Casey G."/>
            <person name="Sizemore N."/>
        </authorList>
    </citation>
    <scope>FUNCTION IN WNT SIGNALING</scope>
    <scope>SUBCELLULAR LOCATION</scope>
    <scope>INTERACTION WITH CTNNB1</scope>
</reference>
<reference key="7">
    <citation type="journal article" date="2009" name="FEBS Lett.">
        <title>MCC, a new interacting protein for Scrib, is required for cell migration in epithelial cells.</title>
        <authorList>
            <person name="Arnaud C."/>
            <person name="Sebbagh M."/>
            <person name="Nola S."/>
            <person name="Audebert S."/>
            <person name="Bidaut G."/>
            <person name="Hermant A."/>
            <person name="Gayet O."/>
            <person name="Dusetti N.J."/>
            <person name="Ollendorff V."/>
            <person name="Santoni M.J."/>
            <person name="Borg J.P."/>
            <person name="Lecine P."/>
        </authorList>
    </citation>
    <scope>FUNCTION IN CELL MIGRATION</scope>
    <scope>SUBCELLULAR LOCATION</scope>
    <scope>INTERACTION WITH SCRIB; EZR; SNX27; NHERF1 AND NHERF2</scope>
</reference>
<reference key="8">
    <citation type="journal article" date="2009" name="Sci. Signal.">
        <title>Quantitative phosphoproteomic analysis of T cell receptor signaling reveals system-wide modulation of protein-protein interactions.</title>
        <authorList>
            <person name="Mayya V."/>
            <person name="Lundgren D.H."/>
            <person name="Hwang S.-I."/>
            <person name="Rezaul K."/>
            <person name="Wu L."/>
            <person name="Eng J.K."/>
            <person name="Rodionov V."/>
            <person name="Han D.K."/>
        </authorList>
    </citation>
    <scope>IDENTIFICATION BY MASS SPECTROMETRY [LARGE SCALE ANALYSIS]</scope>
    <source>
        <tissue>Leukemic T-cell</tissue>
    </source>
</reference>
<reference key="9">
    <citation type="journal article" date="2012" name="Biochim. Biophys. Acta">
        <title>The PDZ-binding motif of MCC is phosphorylated at position -1 and controls lamellipodia formation in colon epithelial cells.</title>
        <authorList>
            <person name="Pangon L."/>
            <person name="Van Kralingen C."/>
            <person name="Abas M."/>
            <person name="Daly R.J."/>
            <person name="Musgrove E.A."/>
            <person name="Kohonen-Corish M.R."/>
        </authorList>
    </citation>
    <scope>FUNCTION</scope>
    <scope>PDZ-BINDING MOTIF</scope>
    <scope>PHOSPHORYLATION AT SER-828</scope>
    <scope>INTERACTION WITH SCRIB AND MYH10</scope>
    <scope>SUBCELLULAR LOCATION</scope>
    <scope>MUTAGENESIS OF SER-828</scope>
</reference>
<reference key="10">
    <citation type="journal article" date="2014" name="J. Proteomics">
        <title>An enzyme assisted RP-RPLC approach for in-depth analysis of human liver phosphoproteome.</title>
        <authorList>
            <person name="Bian Y."/>
            <person name="Song C."/>
            <person name="Cheng K."/>
            <person name="Dong M."/>
            <person name="Wang F."/>
            <person name="Huang J."/>
            <person name="Sun D."/>
            <person name="Wang L."/>
            <person name="Ye M."/>
            <person name="Zou H."/>
        </authorList>
    </citation>
    <scope>IDENTIFICATION BY MASS SPECTROMETRY [LARGE SCALE ANALYSIS]</scope>
    <source>
        <tissue>Liver</tissue>
    </source>
</reference>
<reference key="11">
    <citation type="journal article" date="1991" name="Science">
        <title>Mutations of chromosome 5q21 genes in FAP and colorectal cancer patients.</title>
        <authorList>
            <person name="Nishisho I."/>
            <person name="Nakamura Y."/>
            <person name="Miyoshi Y."/>
            <person name="Miki Y."/>
            <person name="Ando H."/>
            <person name="Horii A."/>
            <person name="Koyama K."/>
            <person name="Utsunomiya J."/>
            <person name="Baba S."/>
            <person name="Hedge P."/>
            <person name="Markham A."/>
            <person name="Krush A.J."/>
            <person name="Petersen G.M."/>
            <person name="Hamilton S.R."/>
            <person name="Nilbert M.C."/>
            <person name="Levy D.B."/>
            <person name="Bryan T.M."/>
            <person name="Preisinger A.C."/>
            <person name="Smith K.J."/>
            <person name="Su L.-K."/>
            <person name="Kinzler K.W."/>
            <person name="Vogelstein B."/>
        </authorList>
    </citation>
    <scope>VARIANTS LEU-267; LEU-486; LEU-490; GLN-506 AND VAL-698</scope>
</reference>
<reference key="12">
    <citation type="journal article" date="2015" name="Int. J. Cancer">
        <title>MCC inhibits beta-catenin transcriptional activity by sequestering DBC1 in the cytoplasm.</title>
        <authorList>
            <person name="Pangon L."/>
            <person name="Mladenova D."/>
            <person name="Watkins L."/>
            <person name="Van Kralingen C."/>
            <person name="Currey N."/>
            <person name="Al-Sohaily S."/>
            <person name="Lecine P."/>
            <person name="Borg J.P."/>
            <person name="Kohonen-Corish M.R."/>
        </authorList>
    </citation>
    <scope>CHARACTERIZATION OF VARIANT GLN-506</scope>
    <scope>FUNCTION</scope>
    <scope>SUBCELLULAR LOCATION</scope>
    <scope>INTERACTION WITH CCAR2</scope>
    <scope>NUCLEAR LOCALIZATION SIGNAL</scope>
</reference>
<reference key="13">
    <citation type="journal article" date="2017" name="J. Am. Soc. Nephrol.">
        <title>MAGI2 mutations cause congenital nephrotic syndrome.</title>
        <authorList>
            <consortium name="NephroS"/>
            <consortium name="UK study of Nephrotic Syndrome"/>
            <person name="Bierzynska A."/>
            <person name="Soderquest K."/>
            <person name="Dean P."/>
            <person name="Colby E."/>
            <person name="Rollason R."/>
            <person name="Jones C."/>
            <person name="Inward C.D."/>
            <person name="McCarthy H.J."/>
            <person name="Simpson M.A."/>
            <person name="Lord G.M."/>
            <person name="Williams M."/>
            <person name="Welsh G.I."/>
            <person name="Koziell A.B."/>
            <person name="Saleem M.A."/>
        </authorList>
    </citation>
    <scope>VARIANT LYS-142</scope>
</reference>
<dbReference type="EMBL" id="M62397">
    <property type="protein sequence ID" value="AAA52069.1"/>
    <property type="molecule type" value="mRNA"/>
</dbReference>
<dbReference type="EMBL" id="AC008536">
    <property type="status" value="NOT_ANNOTATED_CDS"/>
    <property type="molecule type" value="Genomic_DNA"/>
</dbReference>
<dbReference type="EMBL" id="AC010431">
    <property type="status" value="NOT_ANNOTATED_CDS"/>
    <property type="molecule type" value="Genomic_DNA"/>
</dbReference>
<dbReference type="EMBL" id="AC079465">
    <property type="status" value="NOT_ANNOTATED_CDS"/>
    <property type="molecule type" value="Genomic_DNA"/>
</dbReference>
<dbReference type="EMBL" id="AC093208">
    <property type="status" value="NOT_ANNOTATED_CDS"/>
    <property type="molecule type" value="Genomic_DNA"/>
</dbReference>
<dbReference type="EMBL" id="AC106750">
    <property type="status" value="NOT_ANNOTATED_CDS"/>
    <property type="molecule type" value="Genomic_DNA"/>
</dbReference>
<dbReference type="EMBL" id="AC126917">
    <property type="status" value="NOT_ANNOTATED_CDS"/>
    <property type="molecule type" value="Genomic_DNA"/>
</dbReference>
<dbReference type="EMBL" id="CH471086">
    <property type="protein sequence ID" value="EAW48984.1"/>
    <property type="molecule type" value="Genomic_DNA"/>
</dbReference>
<dbReference type="EMBL" id="CH471086">
    <property type="protein sequence ID" value="EAW48986.1"/>
    <property type="molecule type" value="Genomic_DNA"/>
</dbReference>
<dbReference type="EMBL" id="BC009279">
    <property type="protein sequence ID" value="AAH09279.1"/>
    <property type="molecule type" value="mRNA"/>
</dbReference>
<dbReference type="EMBL" id="BC018919">
    <property type="protein sequence ID" value="AAH18919.1"/>
    <property type="molecule type" value="mRNA"/>
</dbReference>
<dbReference type="EMBL" id="AK128596">
    <property type="protein sequence ID" value="BAC87521.1"/>
    <property type="molecule type" value="mRNA"/>
</dbReference>
<dbReference type="CCDS" id="CCDS4111.1">
    <molecule id="P23508-1"/>
</dbReference>
<dbReference type="CCDS" id="CCDS43351.1">
    <molecule id="P23508-2"/>
</dbReference>
<dbReference type="PIR" id="A38434">
    <property type="entry name" value="A33166"/>
</dbReference>
<dbReference type="RefSeq" id="NP_001078846.2">
    <molecule id="P23508-2"/>
    <property type="nucleotide sequence ID" value="NM_001085377.2"/>
</dbReference>
<dbReference type="RefSeq" id="NP_002378.2">
    <molecule id="P23508-1"/>
    <property type="nucleotide sequence ID" value="NM_002387.3"/>
</dbReference>
<dbReference type="PDB" id="6MTU">
    <property type="method" value="X-ray"/>
    <property type="resolution" value="2.14 A"/>
    <property type="chains" value="C/D=822-829"/>
</dbReference>
<dbReference type="PDB" id="6MTV">
    <property type="method" value="X-ray"/>
    <property type="resolution" value="2.60 A"/>
    <property type="chains" value="D/E=822-829"/>
</dbReference>
<dbReference type="PDBsum" id="6MTU"/>
<dbReference type="PDBsum" id="6MTV"/>
<dbReference type="SMR" id="P23508"/>
<dbReference type="BioGRID" id="110333">
    <property type="interactions" value="217"/>
</dbReference>
<dbReference type="CORUM" id="P23508"/>
<dbReference type="DIP" id="DIP-27599N"/>
<dbReference type="FunCoup" id="P23508">
    <property type="interactions" value="2633"/>
</dbReference>
<dbReference type="IntAct" id="P23508">
    <property type="interactions" value="174"/>
</dbReference>
<dbReference type="MINT" id="P23508"/>
<dbReference type="STRING" id="9606.ENSP00000386227"/>
<dbReference type="GlyGen" id="P23508">
    <property type="glycosylation" value="1 site, 1 O-linked glycan (1 site)"/>
</dbReference>
<dbReference type="iPTMnet" id="P23508"/>
<dbReference type="PhosphoSitePlus" id="P23508"/>
<dbReference type="BioMuta" id="MCC"/>
<dbReference type="DMDM" id="317373352"/>
<dbReference type="jPOST" id="P23508"/>
<dbReference type="MassIVE" id="P23508"/>
<dbReference type="PaxDb" id="9606-ENSP00000386227"/>
<dbReference type="PeptideAtlas" id="P23508"/>
<dbReference type="ProteomicsDB" id="54120">
    <molecule id="P23508-1"/>
</dbReference>
<dbReference type="ProteomicsDB" id="54121">
    <molecule id="P23508-2"/>
</dbReference>
<dbReference type="Pumba" id="P23508"/>
<dbReference type="Antibodypedia" id="25386">
    <property type="antibodies" value="233 antibodies from 27 providers"/>
</dbReference>
<dbReference type="DNASU" id="4163"/>
<dbReference type="Ensembl" id="ENST00000302475.9">
    <molecule id="P23508-1"/>
    <property type="protein sequence ID" value="ENSP00000305617.4"/>
    <property type="gene ID" value="ENSG00000171444.19"/>
</dbReference>
<dbReference type="Ensembl" id="ENST00000408903.7">
    <molecule id="P23508-2"/>
    <property type="protein sequence ID" value="ENSP00000386227.3"/>
    <property type="gene ID" value="ENSG00000171444.19"/>
</dbReference>
<dbReference type="GeneID" id="4163"/>
<dbReference type="KEGG" id="hsa:4163"/>
<dbReference type="MANE-Select" id="ENST00000408903.7">
    <molecule id="P23508-2"/>
    <property type="protein sequence ID" value="ENSP00000386227.3"/>
    <property type="RefSeq nucleotide sequence ID" value="NM_001085377.2"/>
    <property type="RefSeq protein sequence ID" value="NP_001078846.2"/>
</dbReference>
<dbReference type="UCSC" id="uc003kqj.5">
    <molecule id="P23508-1"/>
    <property type="organism name" value="human"/>
</dbReference>
<dbReference type="AGR" id="HGNC:6935"/>
<dbReference type="CTD" id="4163"/>
<dbReference type="DisGeNET" id="4163"/>
<dbReference type="GeneCards" id="MCC"/>
<dbReference type="HGNC" id="HGNC:6935">
    <property type="gene designation" value="MCC"/>
</dbReference>
<dbReference type="HPA" id="ENSG00000171444">
    <property type="expression patterns" value="Tissue enhanced (ovary)"/>
</dbReference>
<dbReference type="MalaCards" id="MCC"/>
<dbReference type="MIM" id="159350">
    <property type="type" value="gene"/>
</dbReference>
<dbReference type="neXtProt" id="NX_P23508"/>
<dbReference type="OpenTargets" id="ENSG00000171444"/>
<dbReference type="PharmGKB" id="PA30679"/>
<dbReference type="VEuPathDB" id="HostDB:ENSG00000171444"/>
<dbReference type="eggNOG" id="ENOG502QPWE">
    <property type="taxonomic scope" value="Eukaryota"/>
</dbReference>
<dbReference type="GeneTree" id="ENSGT00530000063974"/>
<dbReference type="InParanoid" id="P23508"/>
<dbReference type="OMA" id="EESRGQC"/>
<dbReference type="OrthoDB" id="6256369at2759"/>
<dbReference type="PAN-GO" id="P23508">
    <property type="GO annotations" value="2 GO annotations based on evolutionary models"/>
</dbReference>
<dbReference type="PhylomeDB" id="P23508"/>
<dbReference type="TreeFam" id="TF333056"/>
<dbReference type="PathwayCommons" id="P23508"/>
<dbReference type="SignaLink" id="P23508"/>
<dbReference type="SIGNOR" id="P23508"/>
<dbReference type="BioGRID-ORCS" id="4163">
    <property type="hits" value="10 hits in 1151 CRISPR screens"/>
</dbReference>
<dbReference type="ChiTaRS" id="MCC">
    <property type="organism name" value="human"/>
</dbReference>
<dbReference type="GeneWiki" id="MCC_(gene)"/>
<dbReference type="GenomeRNAi" id="4163"/>
<dbReference type="Pharos" id="P23508">
    <property type="development level" value="Tbio"/>
</dbReference>
<dbReference type="PRO" id="PR:P23508"/>
<dbReference type="Proteomes" id="UP000005640">
    <property type="component" value="Chromosome 5"/>
</dbReference>
<dbReference type="RNAct" id="P23508">
    <property type="molecule type" value="protein"/>
</dbReference>
<dbReference type="Bgee" id="ENSG00000171444">
    <property type="expression patterns" value="Expressed in gingival epithelium and 188 other cell types or tissues"/>
</dbReference>
<dbReference type="ExpressionAtlas" id="P23508">
    <property type="expression patterns" value="baseline and differential"/>
</dbReference>
<dbReference type="GO" id="GO:0005737">
    <property type="term" value="C:cytoplasm"/>
    <property type="evidence" value="ECO:0000314"/>
    <property type="project" value="UniProtKB"/>
</dbReference>
<dbReference type="GO" id="GO:0005829">
    <property type="term" value="C:cytosol"/>
    <property type="evidence" value="ECO:0000314"/>
    <property type="project" value="HPA"/>
</dbReference>
<dbReference type="GO" id="GO:0030027">
    <property type="term" value="C:lamellipodium"/>
    <property type="evidence" value="ECO:0007669"/>
    <property type="project" value="UniProtKB-SubCell"/>
</dbReference>
<dbReference type="GO" id="GO:0005654">
    <property type="term" value="C:nucleoplasm"/>
    <property type="evidence" value="ECO:0000314"/>
    <property type="project" value="HPA"/>
</dbReference>
<dbReference type="GO" id="GO:0005634">
    <property type="term" value="C:nucleus"/>
    <property type="evidence" value="ECO:0000314"/>
    <property type="project" value="UniProtKB"/>
</dbReference>
<dbReference type="GO" id="GO:0005886">
    <property type="term" value="C:plasma membrane"/>
    <property type="evidence" value="ECO:0000314"/>
    <property type="project" value="UniProtKB"/>
</dbReference>
<dbReference type="GO" id="GO:0038023">
    <property type="term" value="F:signaling receptor activity"/>
    <property type="evidence" value="ECO:0000304"/>
    <property type="project" value="ProtInc"/>
</dbReference>
<dbReference type="GO" id="GO:0045184">
    <property type="term" value="P:establishment of protein localization"/>
    <property type="evidence" value="ECO:0000314"/>
    <property type="project" value="CACAO"/>
</dbReference>
<dbReference type="GO" id="GO:0090090">
    <property type="term" value="P:negative regulation of canonical Wnt signaling pathway"/>
    <property type="evidence" value="ECO:0000314"/>
    <property type="project" value="UniProtKB"/>
</dbReference>
<dbReference type="GO" id="GO:0010633">
    <property type="term" value="P:negative regulation of epithelial cell migration"/>
    <property type="evidence" value="ECO:0000315"/>
    <property type="project" value="UniProtKB"/>
</dbReference>
<dbReference type="GO" id="GO:0050680">
    <property type="term" value="P:negative regulation of epithelial cell proliferation"/>
    <property type="evidence" value="ECO:0000314"/>
    <property type="project" value="UniProtKB"/>
</dbReference>
<dbReference type="GO" id="GO:0007165">
    <property type="term" value="P:signal transduction"/>
    <property type="evidence" value="ECO:0000304"/>
    <property type="project" value="ProtInc"/>
</dbReference>
<dbReference type="GO" id="GO:0016055">
    <property type="term" value="P:Wnt signaling pathway"/>
    <property type="evidence" value="ECO:0007669"/>
    <property type="project" value="UniProtKB-KW"/>
</dbReference>
<dbReference type="Gene3D" id="6.10.250.3110">
    <property type="match status" value="1"/>
</dbReference>
<dbReference type="InterPro" id="IPR040171">
    <property type="entry name" value="USBP1-like"/>
</dbReference>
<dbReference type="InterPro" id="IPR019536">
    <property type="entry name" value="USHBP1_PDZ-bd"/>
</dbReference>
<dbReference type="PANTHER" id="PTHR23347:SF4">
    <property type="entry name" value="COLORECTAL MUTANT CANCER PROTEIN"/>
    <property type="match status" value="1"/>
</dbReference>
<dbReference type="PANTHER" id="PTHR23347">
    <property type="entry name" value="COLORECTAL MUTANT CANCER PROTEIN MCC PROTEIN -RELATED"/>
    <property type="match status" value="1"/>
</dbReference>
<dbReference type="Pfam" id="PF10506">
    <property type="entry name" value="USHBP1_PDZ-bd"/>
    <property type="match status" value="2"/>
</dbReference>
<gene>
    <name type="primary">MCC</name>
</gene>
<organism>
    <name type="scientific">Homo sapiens</name>
    <name type="common">Human</name>
    <dbReference type="NCBI Taxonomy" id="9606"/>
    <lineage>
        <taxon>Eukaryota</taxon>
        <taxon>Metazoa</taxon>
        <taxon>Chordata</taxon>
        <taxon>Craniata</taxon>
        <taxon>Vertebrata</taxon>
        <taxon>Euteleostomi</taxon>
        <taxon>Mammalia</taxon>
        <taxon>Eutheria</taxon>
        <taxon>Euarchontoglires</taxon>
        <taxon>Primates</taxon>
        <taxon>Haplorrhini</taxon>
        <taxon>Catarrhini</taxon>
        <taxon>Hominidae</taxon>
        <taxon>Homo</taxon>
    </lineage>
</organism>
<protein>
    <recommendedName>
        <fullName>Colorectal mutant cancer protein</fullName>
        <shortName>Protein MCC</shortName>
    </recommendedName>
</protein>
<keyword id="KW-0002">3D-structure</keyword>
<keyword id="KW-0025">Alternative splicing</keyword>
<keyword id="KW-1003">Cell membrane</keyword>
<keyword id="KW-0966">Cell projection</keyword>
<keyword id="KW-0963">Cytoplasm</keyword>
<keyword id="KW-0472">Membrane</keyword>
<keyword id="KW-0539">Nucleus</keyword>
<keyword id="KW-0597">Phosphoprotein</keyword>
<keyword id="KW-1267">Proteomics identification</keyword>
<keyword id="KW-1185">Reference proteome</keyword>
<keyword id="KW-0043">Tumor suppressor</keyword>
<keyword id="KW-0879">Wnt signaling pathway</keyword>
<name>CRCM_HUMAN</name>
<feature type="chain" id="PRO_0000079333" description="Colorectal mutant cancer protein">
    <location>
        <begin position="1"/>
        <end position="829"/>
    </location>
</feature>
<feature type="region of interest" description="Disordered" evidence="1">
    <location>
        <begin position="114"/>
        <end position="139"/>
    </location>
</feature>
<feature type="region of interest" description="Disordered" evidence="1">
    <location>
        <begin position="282"/>
        <end position="320"/>
    </location>
</feature>
<feature type="region of interest" description="Disordered" evidence="1">
    <location>
        <begin position="672"/>
        <end position="700"/>
    </location>
</feature>
<feature type="short sequence motif" description="Nuclear localization signal" evidence="9">
    <location>
        <begin position="766"/>
        <end position="782"/>
    </location>
</feature>
<feature type="short sequence motif" description="PDZ-binding">
    <location>
        <begin position="826"/>
        <end position="829"/>
    </location>
</feature>
<feature type="compositionally biased region" description="Basic and acidic residues" evidence="1">
    <location>
        <begin position="123"/>
        <end position="132"/>
    </location>
</feature>
<feature type="compositionally biased region" description="Polar residues" evidence="1">
    <location>
        <begin position="285"/>
        <end position="312"/>
    </location>
</feature>
<feature type="compositionally biased region" description="Basic and acidic residues" evidence="1">
    <location>
        <begin position="689"/>
        <end position="698"/>
    </location>
</feature>
<feature type="modified residue" description="Phosphoserine" evidence="8">
    <location>
        <position position="828"/>
    </location>
</feature>
<feature type="splice variant" id="VSP_037660" description="In isoform 2." evidence="11">
    <original>MNSGVAMKYGNDSSAELSE</original>
    <variation>MMAAAAAAAAGSSSSGGGGGGSGSSSSSSDTSSTGEEERMRRLFQTCDGDGDGYISRNDLLMVCRQLNMEESVAEIMNQLGADENGKISFQDFTRCRMQLVREIRKEEVDLSAKSDNSCTKKLRDRIASWPTSSDNSLGALSAARESWEYDSGARDLQSPDVQSQSALQKLLEYGGSSLHQQAALHKLLTQSPHIGNSVGGSYLELANT</variation>
    <location>
        <begin position="1"/>
        <end position="19"/>
    </location>
</feature>
<feature type="sequence variant" id="VAR_079267" description="In dbSNP:rs185322500." evidence="10">
    <original>E</original>
    <variation>K</variation>
    <location>
        <position position="142"/>
    </location>
</feature>
<feature type="sequence variant" id="VAR_050905" description="In dbSNP:rs6594681." evidence="2 3 5">
    <original>K</original>
    <variation>R</variation>
    <location>
        <position position="190"/>
    </location>
</feature>
<feature type="sequence variant" id="VAR_005141" description="In a colorectal cancer sample." evidence="4">
    <original>R</original>
    <variation>L</variation>
    <location>
        <position position="267"/>
    </location>
</feature>
<feature type="sequence variant" id="VAR_005142" description="In a colorectal cancer sample; dbSNP:rs35269015." evidence="4">
    <original>P</original>
    <variation>L</variation>
    <location>
        <position position="486"/>
    </location>
</feature>
<feature type="sequence variant" id="VAR_005143" description="In a colorectal cancer sample; dbSNP:rs760495893." evidence="4">
    <original>S</original>
    <variation>L</variation>
    <location>
        <position position="490"/>
    </location>
</feature>
<feature type="sequence variant" id="VAR_005144" description="In colorectal cancer samples; somatic mutation; decreased binding to CCAR2; significant decrease in its ability to induce the relocalization of CCAR2 to the cytoplasm; loss of its ability to repress the beta-catenin pathway; loss of its ability to induce the SIRT1-mediated deacetylation of beta-catenin; dbSNP:rs121917732." evidence="4 5 9">
    <original>R</original>
    <variation>Q</variation>
    <location>
        <position position="506"/>
    </location>
</feature>
<feature type="sequence variant" id="VAR_005145" description="In colorectal cancer samples; somatic mutation; dbSNP:rs121917731." evidence="4 5">
    <original>A</original>
    <variation>V</variation>
    <location>
        <position position="698"/>
    </location>
</feature>
<feature type="sequence variant" id="VAR_033753" description="In dbSNP:rs17313892.">
    <original>S</original>
    <variation>C</variation>
    <location>
        <position position="751"/>
    </location>
</feature>
<feature type="mutagenesis site" description="Reduced binding to SCRIB." evidence="8">
    <original>S</original>
    <variation>A</variation>
    <location>
        <position position="828"/>
    </location>
</feature>
<feature type="mutagenesis site" description="Higher membrane localization, reduced formation of lamellipodia, accumulation of MYH10 at the cell cortex." evidence="8">
    <original>S</original>
    <variation>D</variation>
    <location>
        <position position="828"/>
    </location>
</feature>
<feature type="sequence conflict" description="In Ref. 5; BAC87521." evidence="12" ref="5">
    <original>S</original>
    <variation>G</variation>
    <location>
        <position position="353"/>
    </location>
</feature>
<feature type="strand" evidence="13">
    <location>
        <begin position="825"/>
        <end position="829"/>
    </location>
</feature>
<feature type="sequence conflict" description="In Ref. 5; BAC87521." evidence="12" ref="5">
    <original>S</original>
    <variation>GSSSG</variation>
    <location sequence="P23508-2">
        <position position="25"/>
    </location>
</feature>
<evidence type="ECO:0000256" key="1">
    <source>
        <dbReference type="SAM" id="MobiDB-lite"/>
    </source>
</evidence>
<evidence type="ECO:0000269" key="2">
    <source>
    </source>
</evidence>
<evidence type="ECO:0000269" key="3">
    <source>
    </source>
</evidence>
<evidence type="ECO:0000269" key="4">
    <source>
    </source>
</evidence>
<evidence type="ECO:0000269" key="5">
    <source>
    </source>
</evidence>
<evidence type="ECO:0000269" key="6">
    <source>
    </source>
</evidence>
<evidence type="ECO:0000269" key="7">
    <source>
    </source>
</evidence>
<evidence type="ECO:0000269" key="8">
    <source>
    </source>
</evidence>
<evidence type="ECO:0000269" key="9">
    <source>
    </source>
</evidence>
<evidence type="ECO:0000269" key="10">
    <source>
    </source>
</evidence>
<evidence type="ECO:0000303" key="11">
    <source>
    </source>
</evidence>
<evidence type="ECO:0000305" key="12"/>
<evidence type="ECO:0007829" key="13">
    <source>
        <dbReference type="PDB" id="6MTU"/>
    </source>
</evidence>
<comment type="function">
    <text evidence="6 7 8 9">Candidate for the putative colorectal tumor suppressor gene located at 5q21. Suppresses cell proliferation and the Wnt/b-catenin pathway in colorectal cancer cells. Inhibits DNA binding of b-catenin/TCF/LEF transcription factors. Involved in cell migration independently of RAC1, CDC42 and p21-activated kinase (PAK) activation (PubMed:18591935, PubMed:19555689, PubMed:22480440). Represses the beta-catenin pathway (canonical Wnt signaling pathway) in a CCAR2-dependent manner by sequestering CCAR2 to the cytoplasm, thereby impairing its ability to inhibit SIRT1 which is involved in the deacetylation and negative regulation of beta-catenin (CTNB1) transcriptional activity (PubMed:24824780).</text>
</comment>
<comment type="subunit">
    <text evidence="6 7 8 9">Interacts with SCRIB (via phosphorylated PDZ-binding motif), EZR, SNX27, NHERF1 and NHERF2. Interacts with CTNNB1; the interaction is enhanced upon Wnt stimulation. Interacts with MYH10. Interacts with CCAR2.</text>
</comment>
<comment type="interaction">
    <interactant intactId="EBI-307531">
        <id>P23508</id>
    </interactant>
    <interactant intactId="EBI-714754">
        <id>O95696</id>
        <label>BRD1</label>
    </interactant>
    <organismsDiffer>false</organismsDiffer>
    <experiments>4</experiments>
</comment>
<comment type="interaction">
    <interactant intactId="EBI-307531">
        <id>P23508</id>
    </interactant>
    <interactant intactId="EBI-715389">
        <id>Q9H7E9</id>
        <label>C8orf33</label>
    </interactant>
    <organismsDiffer>false</organismsDiffer>
    <experiments>3</experiments>
</comment>
<comment type="interaction">
    <interactant intactId="EBI-307531">
        <id>P23508</id>
    </interactant>
    <interactant intactId="EBI-751596">
        <id>Q96LL4</id>
        <label>C8orf48</label>
    </interactant>
    <organismsDiffer>false</organismsDiffer>
    <experiments>3</experiments>
</comment>
<comment type="interaction">
    <interactant intactId="EBI-307531">
        <id>P23508</id>
    </interactant>
    <interactant intactId="EBI-712912">
        <id>Q9HC52</id>
        <label>CBX8</label>
    </interactant>
    <organismsDiffer>false</organismsDiffer>
    <experiments>3</experiments>
</comment>
<comment type="interaction">
    <interactant intactId="EBI-307531">
        <id>P23508</id>
    </interactant>
    <interactant intactId="EBI-12095166">
        <id>Q8NEF3-2</id>
        <label>CCDC112</label>
    </interactant>
    <organismsDiffer>false</organismsDiffer>
    <experiments>3</experiments>
</comment>
<comment type="interaction">
    <interactant intactId="EBI-307531">
        <id>P23508</id>
    </interactant>
    <interactant intactId="EBI-10749669">
        <id>Q8IYE0</id>
        <label>CCDC146</label>
    </interactant>
    <organismsDiffer>false</organismsDiffer>
    <experiments>3</experiments>
</comment>
<comment type="interaction">
    <interactant intactId="EBI-307531">
        <id>P23508</id>
    </interactant>
    <interactant intactId="EBI-740814">
        <id>Q8N715</id>
        <label>CCDC185</label>
    </interactant>
    <organismsDiffer>false</organismsDiffer>
    <experiments>3</experiments>
</comment>
<comment type="interaction">
    <interactant intactId="EBI-307531">
        <id>P23508</id>
    </interactant>
    <interactant intactId="EBI-3919850">
        <id>Q8IVW4</id>
        <label>CDKL3</label>
    </interactant>
    <organismsDiffer>false</organismsDiffer>
    <experiments>3</experiments>
</comment>
<comment type="interaction">
    <interactant intactId="EBI-307531">
        <id>P23508</id>
    </interactant>
    <interactant intactId="EBI-1104570">
        <id>Q8IYX8</id>
        <label>CEP57L1</label>
    </interactant>
    <organismsDiffer>false</organismsDiffer>
    <experiments>3</experiments>
</comment>
<comment type="interaction">
    <interactant intactId="EBI-307531">
        <id>P23508</id>
    </interactant>
    <interactant intactId="EBI-372775">
        <id>Q96GE4</id>
        <label>CEP95</label>
    </interactant>
    <organismsDiffer>false</organismsDiffer>
    <experiments>3</experiments>
</comment>
<comment type="interaction">
    <interactant intactId="EBI-307531">
        <id>P23508</id>
    </interactant>
    <interactant intactId="EBI-10245749">
        <id>Q5T655</id>
        <label>CFAP58</label>
    </interactant>
    <organismsDiffer>false</organismsDiffer>
    <experiments>3</experiments>
</comment>
<comment type="interaction">
    <interactant intactId="EBI-307531">
        <id>P23508</id>
    </interactant>
    <interactant intactId="EBI-749343">
        <id>P49674</id>
        <label>CSNK1E</label>
    </interactant>
    <organismsDiffer>false</organismsDiffer>
    <experiments>8</experiments>
</comment>
<comment type="interaction">
    <interactant intactId="EBI-307531">
        <id>P23508</id>
    </interactant>
    <interactant intactId="EBI-9381887">
        <id>Q8WXU2-2</id>
        <label>DNAAF4</label>
    </interactant>
    <organismsDiffer>false</organismsDiffer>
    <experiments>3</experiments>
</comment>
<comment type="interaction">
    <interactant intactId="EBI-307531">
        <id>P23508</id>
    </interactant>
    <interactant intactId="EBI-742350">
        <id>Q14241</id>
        <label>ELOA</label>
    </interactant>
    <organismsDiffer>false</organismsDiffer>
    <experiments>3</experiments>
</comment>
<comment type="interaction">
    <interactant intactId="EBI-307531">
        <id>P23508</id>
    </interactant>
    <interactant intactId="EBI-12001340">
        <id>P62508-3</id>
        <label>ESRRG</label>
    </interactant>
    <organismsDiffer>false</organismsDiffer>
    <experiments>3</experiments>
</comment>
<comment type="interaction">
    <interactant intactId="EBI-307531">
        <id>P23508</id>
    </interactant>
    <interactant intactId="EBI-719941">
        <id>Q3B820</id>
        <label>FAM161A</label>
    </interactant>
    <organismsDiffer>false</organismsDiffer>
    <experiments>3</experiments>
</comment>
<comment type="interaction">
    <interactant intactId="EBI-307531">
        <id>P23508</id>
    </interactant>
    <interactant intactId="EBI-11479104">
        <id>O43320</id>
        <label>FGF16</label>
    </interactant>
    <organismsDiffer>false</organismsDiffer>
    <experiments>3</experiments>
</comment>
<comment type="interaction">
    <interactant intactId="EBI-307531">
        <id>P23508</id>
    </interactant>
    <interactant intactId="EBI-2853321">
        <id>P29084</id>
        <label>GTF2E2</label>
    </interactant>
    <organismsDiffer>false</organismsDiffer>
    <experiments>2</experiments>
</comment>
<comment type="interaction">
    <interactant intactId="EBI-307531">
        <id>P23508</id>
    </interactant>
    <interactant intactId="EBI-747481">
        <id>Q9NV31</id>
        <label>IMP3</label>
    </interactant>
    <organismsDiffer>false</organismsDiffer>
    <experiments>5</experiments>
</comment>
<comment type="interaction">
    <interactant intactId="EBI-307531">
        <id>P23508</id>
    </interactant>
    <interactant intactId="EBI-399080">
        <id>Q92993</id>
        <label>KAT5</label>
    </interactant>
    <organismsDiffer>false</organismsDiffer>
    <experiments>3</experiments>
</comment>
<comment type="interaction">
    <interactant intactId="EBI-307531">
        <id>P23508</id>
    </interactant>
    <interactant intactId="EBI-1104854">
        <id>O14782</id>
        <label>KIF3C</label>
    </interactant>
    <organismsDiffer>false</organismsDiffer>
    <experiments>3</experiments>
</comment>
<comment type="interaction">
    <interactant intactId="EBI-307531">
        <id>P23508</id>
    </interactant>
    <interactant intactId="EBI-14069005">
        <id>Q9BVG8-5</id>
        <label>KIFC3</label>
    </interactant>
    <organismsDiffer>false</organismsDiffer>
    <experiments>3</experiments>
</comment>
<comment type="interaction">
    <interactant intactId="EBI-307531">
        <id>P23508</id>
    </interactant>
    <interactant intactId="EBI-2805176">
        <id>Q96CN5</id>
        <label>LRRC45</label>
    </interactant>
    <organismsDiffer>false</organismsDiffer>
    <experiments>3</experiments>
</comment>
<comment type="interaction">
    <interactant intactId="EBI-307531">
        <id>P23508</id>
    </interactant>
    <interactant intactId="EBI-949966">
        <id>Q9HCI5</id>
        <label>MAGEE1</label>
    </interactant>
    <organismsDiffer>false</organismsDiffer>
    <experiments>6</experiments>
</comment>
<comment type="interaction">
    <interactant intactId="EBI-307531">
        <id>P23508</id>
    </interactant>
    <interactant intactId="EBI-14086479">
        <id>Q8IVT4</id>
        <label>MGC50722</label>
    </interactant>
    <organismsDiffer>false</organismsDiffer>
    <experiments>3</experiments>
</comment>
<comment type="interaction">
    <interactant intactId="EBI-307531">
        <id>P23508</id>
    </interactant>
    <interactant intactId="EBI-633182">
        <id>P51955</id>
        <label>NEK2</label>
    </interactant>
    <organismsDiffer>false</organismsDiffer>
    <experiments>3</experiments>
</comment>
<comment type="interaction">
    <interactant intactId="EBI-307531">
        <id>P23508</id>
    </interactant>
    <interactant intactId="EBI-352889">
        <id>Q15653</id>
        <label>NFKBIB</label>
    </interactant>
    <organismsDiffer>false</organismsDiffer>
    <experiments>4</experiments>
</comment>
<comment type="interaction">
    <interactant intactId="EBI-307531">
        <id>P23508</id>
    </interactant>
    <interactant intactId="EBI-716098">
        <id>Q9UGY1</id>
        <label>NOL12</label>
    </interactant>
    <organismsDiffer>false</organismsDiffer>
    <experiments>3</experiments>
</comment>
<comment type="interaction">
    <interactant intactId="EBI-307531">
        <id>P23508</id>
    </interactant>
    <interactant intactId="EBI-2211679">
        <id>P05165</id>
        <label>PCCA</label>
    </interactant>
    <organismsDiffer>false</organismsDiffer>
    <experiments>3</experiments>
</comment>
<comment type="interaction">
    <interactant intactId="EBI-307531">
        <id>P23508</id>
    </interactant>
    <interactant intactId="EBI-1045072">
        <id>Q96T60</id>
        <label>PNKP</label>
    </interactant>
    <organismsDiffer>false</organismsDiffer>
    <experiments>3</experiments>
</comment>
<comment type="interaction">
    <interactant intactId="EBI-307531">
        <id>P23508</id>
    </interactant>
    <interactant intactId="EBI-10320765">
        <id>Q9UGP5-2</id>
        <label>POLL</label>
    </interactant>
    <organismsDiffer>false</organismsDiffer>
    <experiments>3</experiments>
</comment>
<comment type="interaction">
    <interactant intactId="EBI-307531">
        <id>P23508</id>
    </interactant>
    <interactant intactId="EBI-2798416">
        <id>Q99633</id>
        <label>PRPF18</label>
    </interactant>
    <organismsDiffer>false</organismsDiffer>
    <experiments>3</experiments>
</comment>
<comment type="interaction">
    <interactant intactId="EBI-307531">
        <id>P23508</id>
    </interactant>
    <interactant intactId="EBI-1047946">
        <id>P26045</id>
        <label>PTPN3</label>
    </interactant>
    <organismsDiffer>false</organismsDiffer>
    <experiments>2</experiments>
</comment>
<comment type="interaction">
    <interactant intactId="EBI-307531">
        <id>P23508</id>
    </interactant>
    <interactant intactId="EBI-12171247">
        <id>Q9UJF2-2</id>
        <label>RASAL2</label>
    </interactant>
    <organismsDiffer>false</organismsDiffer>
    <experiments>3</experiments>
</comment>
<comment type="interaction">
    <interactant intactId="EBI-307531">
        <id>P23508</id>
    </interactant>
    <interactant intactId="EBI-1504830">
        <id>Q9P2K3-2</id>
        <label>RCOR3</label>
    </interactant>
    <organismsDiffer>false</organismsDiffer>
    <experiments>3</experiments>
</comment>
<comment type="interaction">
    <interactant intactId="EBI-307531">
        <id>P23508</id>
    </interactant>
    <interactant intactId="EBI-357345">
        <id>Q14160</id>
        <label>SCRIB</label>
    </interactant>
    <organismsDiffer>false</organismsDiffer>
    <experiments>15</experiments>
</comment>
<comment type="interaction">
    <interactant intactId="EBI-307531">
        <id>P23508</id>
    </interactant>
    <interactant intactId="EBI-2814558">
        <id>Q9NWH9</id>
        <label>SLTM</label>
    </interactant>
    <organismsDiffer>false</organismsDiffer>
    <experiments>3</experiments>
</comment>
<comment type="interaction">
    <interactant intactId="EBI-307531">
        <id>P23508</id>
    </interactant>
    <interactant intactId="EBI-750559">
        <id>O95391</id>
        <label>SLU7</label>
    </interactant>
    <organismsDiffer>false</organismsDiffer>
    <experiments>3</experiments>
</comment>
<comment type="interaction">
    <interactant intactId="EBI-307531">
        <id>P23508</id>
    </interactant>
    <interactant intactId="EBI-745392">
        <id>Q9BSW7</id>
        <label>SYT17</label>
    </interactant>
    <organismsDiffer>false</organismsDiffer>
    <experiments>3</experiments>
</comment>
<comment type="interaction">
    <interactant intactId="EBI-307531">
        <id>P23508</id>
    </interactant>
    <interactant intactId="EBI-10246152">
        <id>Q5T7P8-2</id>
        <label>SYT6</label>
    </interactant>
    <organismsDiffer>false</organismsDiffer>
    <experiments>3</experiments>
</comment>
<comment type="interaction">
    <interactant intactId="EBI-307531">
        <id>P23508</id>
    </interactant>
    <interactant intactId="EBI-710310">
        <id>Q15560</id>
        <label>TCEA2</label>
    </interactant>
    <organismsDiffer>false</organismsDiffer>
    <experiments>3</experiments>
</comment>
<comment type="interaction">
    <interactant intactId="EBI-307531">
        <id>P23508</id>
    </interactant>
    <interactant intactId="EBI-11955057">
        <id>Q8N8B7-2</id>
        <label>TCEANC</label>
    </interactant>
    <organismsDiffer>false</organismsDiffer>
    <experiments>3</experiments>
</comment>
<comment type="interaction">
    <interactant intactId="EBI-307531">
        <id>P23508</id>
    </interactant>
    <interactant intactId="EBI-741350">
        <id>Q9BT49</id>
        <label>THAP7</label>
    </interactant>
    <organismsDiffer>false</organismsDiffer>
    <experiments>3</experiments>
</comment>
<comment type="interaction">
    <interactant intactId="EBI-307531">
        <id>P23508</id>
    </interactant>
    <interactant intactId="EBI-2515774">
        <id>Q8IZ69</id>
        <label>TRMT2A</label>
    </interactant>
    <organismsDiffer>false</organismsDiffer>
    <experiments>3</experiments>
</comment>
<comment type="interaction">
    <interactant intactId="EBI-307531">
        <id>P23508</id>
    </interactant>
    <interactant intactId="EBI-10687282">
        <id>Q9NRE2</id>
        <label>TSHZ2</label>
    </interactant>
    <organismsDiffer>false</organismsDiffer>
    <experiments>3</experiments>
</comment>
<comment type="interaction">
    <interactant intactId="EBI-307531">
        <id>P23508</id>
    </interactant>
    <interactant intactId="EBI-359793">
        <id>P40222</id>
        <label>TXLNA</label>
    </interactant>
    <organismsDiffer>false</organismsDiffer>
    <experiments>3</experiments>
</comment>
<comment type="interaction">
    <interactant intactId="EBI-307531">
        <id>P23508</id>
    </interactant>
    <interactant intactId="EBI-11737646">
        <id>Q5TAP6</id>
        <label>UTP14C</label>
    </interactant>
    <organismsDiffer>false</organismsDiffer>
    <experiments>3</experiments>
</comment>
<comment type="interaction">
    <interactant intactId="EBI-307531">
        <id>P23508</id>
    </interactant>
    <interactant intactId="EBI-744864">
        <id>P10074</id>
        <label>ZBTB48</label>
    </interactant>
    <organismsDiffer>false</organismsDiffer>
    <experiments>3</experiments>
</comment>
<comment type="interaction">
    <interactant intactId="EBI-307531">
        <id>P23508</id>
    </interactant>
    <interactant intactId="EBI-11278550">
        <id>P17014</id>
        <label>ZNF12</label>
    </interactant>
    <organismsDiffer>false</organismsDiffer>
    <experiments>3</experiments>
</comment>
<comment type="interaction">
    <interactant intactId="EBI-307531">
        <id>P23508</id>
    </interactant>
    <interactant intactId="EBI-751960">
        <id>O95125</id>
        <label>ZNF202</label>
    </interactant>
    <organismsDiffer>false</organismsDiffer>
    <experiments>3</experiments>
</comment>
<comment type="interaction">
    <interactant intactId="EBI-307531">
        <id>P23508</id>
    </interactant>
    <interactant intactId="EBI-4395808">
        <id>O43296</id>
        <label>ZNF264</label>
    </interactant>
    <organismsDiffer>false</organismsDiffer>
    <experiments>3</experiments>
</comment>
<comment type="interaction">
    <interactant intactId="EBI-307531">
        <id>P23508</id>
    </interactant>
    <interactant intactId="EBI-1640965">
        <id>P17036</id>
        <label>ZNF3</label>
    </interactant>
    <organismsDiffer>false</organismsDiffer>
    <experiments>3</experiments>
</comment>
<comment type="interaction">
    <interactant intactId="EBI-307531">
        <id>P23508</id>
    </interactant>
    <interactant intactId="EBI-11041653">
        <id>P13682</id>
        <label>ZNF35</label>
    </interactant>
    <organismsDiffer>false</organismsDiffer>
    <experiments>3</experiments>
</comment>
<comment type="interaction">
    <interactant intactId="EBI-307531">
        <id>P23508</id>
    </interactant>
    <interactant intactId="EBI-740727">
        <id>Q8TAU3</id>
        <label>ZNF417</label>
    </interactant>
    <organismsDiffer>false</organismsDiffer>
    <experiments>3</experiments>
</comment>
<comment type="interaction">
    <interactant intactId="EBI-307531">
        <id>P23508</id>
    </interactant>
    <interactant intactId="EBI-11962468">
        <id>Q7Z4V0</id>
        <label>ZNF438</label>
    </interactant>
    <organismsDiffer>false</organismsDiffer>
    <experiments>3</experiments>
</comment>
<comment type="interaction">
    <interactant intactId="EBI-307531">
        <id>P23508</id>
    </interactant>
    <interactant intactId="EBI-10486136">
        <id>Q6ZNH5</id>
        <label>ZNF497</label>
    </interactant>
    <organismsDiffer>false</organismsDiffer>
    <experiments>3</experiments>
</comment>
<comment type="interaction">
    <interactant intactId="EBI-307531">
        <id>P23508</id>
    </interactant>
    <interactant intactId="EBI-10226133">
        <id>Q08ER8</id>
        <label>ZNF543</label>
    </interactant>
    <organismsDiffer>false</organismsDiffer>
    <experiments>3</experiments>
</comment>
<comment type="interaction">
    <interactant intactId="EBI-307531">
        <id>P23508</id>
    </interactant>
    <interactant intactId="EBI-11985915">
        <id>Q5T619</id>
        <label>ZNF648</label>
    </interactant>
    <organismsDiffer>false</organismsDiffer>
    <experiments>3</experiments>
</comment>
<comment type="interaction">
    <interactant intactId="EBI-307531">
        <id>P23508</id>
    </interactant>
    <interactant intactId="EBI-10240849">
        <id>Q3KQV3</id>
        <label>ZNF792</label>
    </interactant>
    <organismsDiffer>false</organismsDiffer>
    <experiments>3</experiments>
</comment>
<comment type="subcellular location">
    <subcellularLocation>
        <location>Cell membrane</location>
    </subcellularLocation>
    <subcellularLocation>
        <location>Cell projection</location>
        <location>Lamellipodium</location>
    </subcellularLocation>
    <subcellularLocation>
        <location evidence="9">Nucleus</location>
    </subcellularLocation>
    <subcellularLocation>
        <location evidence="9">Cytoplasm</location>
    </subcellularLocation>
    <text>Colocalizes with actin at the leading edge of polarized cells.</text>
</comment>
<comment type="alternative products">
    <event type="alternative splicing"/>
    <isoform>
        <id>P23508-1</id>
        <name>1</name>
        <sequence type="displayed"/>
    </isoform>
    <isoform>
        <id>P23508-2</id>
        <name>2</name>
        <sequence type="described" ref="VSP_037660"/>
    </isoform>
</comment>
<comment type="tissue specificity">
    <text>Expressed in a variety of tissues.</text>
</comment>
<comment type="similarity">
    <text evidence="12">Belongs to the MCC family.</text>
</comment>
<proteinExistence type="evidence at protein level"/>